<feature type="chain" id="PRO_0000322411" description="Chorismate synthase">
    <location>
        <begin position="1"/>
        <end position="404"/>
    </location>
</feature>
<feature type="binding site" evidence="1">
    <location>
        <position position="40"/>
    </location>
    <ligand>
        <name>NADP(+)</name>
        <dbReference type="ChEBI" id="CHEBI:58349"/>
    </ligand>
</feature>
<feature type="binding site" evidence="1">
    <location>
        <position position="46"/>
    </location>
    <ligand>
        <name>NADP(+)</name>
        <dbReference type="ChEBI" id="CHEBI:58349"/>
    </ligand>
</feature>
<feature type="binding site" evidence="1">
    <location>
        <begin position="135"/>
        <end position="137"/>
    </location>
    <ligand>
        <name>FMN</name>
        <dbReference type="ChEBI" id="CHEBI:58210"/>
    </ligand>
</feature>
<feature type="binding site" evidence="1">
    <location>
        <begin position="256"/>
        <end position="257"/>
    </location>
    <ligand>
        <name>FMN</name>
        <dbReference type="ChEBI" id="CHEBI:58210"/>
    </ligand>
</feature>
<feature type="binding site" evidence="1">
    <location>
        <position position="300"/>
    </location>
    <ligand>
        <name>FMN</name>
        <dbReference type="ChEBI" id="CHEBI:58210"/>
    </ligand>
</feature>
<feature type="binding site" evidence="1">
    <location>
        <begin position="315"/>
        <end position="319"/>
    </location>
    <ligand>
        <name>FMN</name>
        <dbReference type="ChEBI" id="CHEBI:58210"/>
    </ligand>
</feature>
<feature type="binding site" evidence="1">
    <location>
        <position position="341"/>
    </location>
    <ligand>
        <name>FMN</name>
        <dbReference type="ChEBI" id="CHEBI:58210"/>
    </ligand>
</feature>
<comment type="function">
    <text evidence="1">Catalyzes the anti-1,4-elimination of the C-3 phosphate and the C-6 proR hydrogen from 5-enolpyruvylshikimate-3-phosphate (EPSP) to yield chorismate, which is the branch point compound that serves as the starting substrate for the three terminal pathways of aromatic amino acid biosynthesis. This reaction introduces a second double bond into the aromatic ring system.</text>
</comment>
<comment type="catalytic activity">
    <reaction evidence="1">
        <text>5-O-(1-carboxyvinyl)-3-phosphoshikimate = chorismate + phosphate</text>
        <dbReference type="Rhea" id="RHEA:21020"/>
        <dbReference type="ChEBI" id="CHEBI:29748"/>
        <dbReference type="ChEBI" id="CHEBI:43474"/>
        <dbReference type="ChEBI" id="CHEBI:57701"/>
        <dbReference type="EC" id="4.2.3.5"/>
    </reaction>
</comment>
<comment type="cofactor">
    <cofactor evidence="1">
        <name>FMNH2</name>
        <dbReference type="ChEBI" id="CHEBI:57618"/>
    </cofactor>
    <text evidence="1">Reduced FMN (FMNH(2)).</text>
</comment>
<comment type="pathway">
    <text evidence="1">Metabolic intermediate biosynthesis; chorismate biosynthesis; chorismate from D-erythrose 4-phosphate and phosphoenolpyruvate: step 7/7.</text>
</comment>
<comment type="subunit">
    <text evidence="1">Homotetramer.</text>
</comment>
<comment type="similarity">
    <text evidence="1">Belongs to the chorismate synthase family.</text>
</comment>
<accession>A3PZ50</accession>
<reference key="1">
    <citation type="submission" date="2007-02" db="EMBL/GenBank/DDBJ databases">
        <title>Complete sequence of Mycobacterium sp. JLS.</title>
        <authorList>
            <consortium name="US DOE Joint Genome Institute"/>
            <person name="Copeland A."/>
            <person name="Lucas S."/>
            <person name="Lapidus A."/>
            <person name="Barry K."/>
            <person name="Detter J.C."/>
            <person name="Glavina del Rio T."/>
            <person name="Hammon N."/>
            <person name="Israni S."/>
            <person name="Dalin E."/>
            <person name="Tice H."/>
            <person name="Pitluck S."/>
            <person name="Chain P."/>
            <person name="Malfatti S."/>
            <person name="Shin M."/>
            <person name="Vergez L."/>
            <person name="Schmutz J."/>
            <person name="Larimer F."/>
            <person name="Land M."/>
            <person name="Hauser L."/>
            <person name="Kyrpides N."/>
            <person name="Mikhailova N."/>
            <person name="Miller C.D."/>
            <person name="Anderson A.J."/>
            <person name="Sims R.C."/>
            <person name="Richardson P."/>
        </authorList>
    </citation>
    <scope>NUCLEOTIDE SEQUENCE [LARGE SCALE GENOMIC DNA]</scope>
    <source>
        <strain>JLS</strain>
    </source>
</reference>
<gene>
    <name evidence="1" type="primary">aroC</name>
    <name type="ordered locus">Mjls_2393</name>
</gene>
<name>AROC_MYCSJ</name>
<evidence type="ECO:0000255" key="1">
    <source>
        <dbReference type="HAMAP-Rule" id="MF_00300"/>
    </source>
</evidence>
<sequence length="404" mass="42286">MLRWTTAGESHGRALVAVLEGMVAGVSLTTEDIGAQLRRRRLGYGRGARMKFEQDEITMLGGVRHGVTLGGPIAIQIGNTEWPKWETVMAADPVDPAELAEIARNAPLTRPRPGHADYAGMLKYGFDDARPVLERASARETAARVAAGTVARAFLRQALGVEVVSHVISIGASTPYDGPPPQPADLTAIDDSPVRAFDEAAEKSMIAEIEAAKRDGDTLGGVVEVVVSGLPVGLGSFTSGDNRLDSQLAAAVMGIQAIKGVEIGDGFETARRRGSVAHDEIYPGPDGVVRSTNRAGGLEGGMTNGQPLRVRAAMKPISTVPRALATVDMTTGDEAVAIHQRSDVCAVPAAGVVVETMVALVLARAALQKFGGDSLTETRTNVESYLRAVAAREPATAQRAQASG</sequence>
<proteinExistence type="inferred from homology"/>
<dbReference type="EC" id="4.2.3.5" evidence="1"/>
<dbReference type="EMBL" id="CP000580">
    <property type="protein sequence ID" value="ABN98177.1"/>
    <property type="molecule type" value="Genomic_DNA"/>
</dbReference>
<dbReference type="SMR" id="A3PZ50"/>
<dbReference type="KEGG" id="mjl:Mjls_2393"/>
<dbReference type="HOGENOM" id="CLU_034547_2_0_11"/>
<dbReference type="BioCyc" id="MSP164757:G1G8C-2412-MONOMER"/>
<dbReference type="UniPathway" id="UPA00053">
    <property type="reaction ID" value="UER00090"/>
</dbReference>
<dbReference type="GO" id="GO:0005829">
    <property type="term" value="C:cytosol"/>
    <property type="evidence" value="ECO:0007669"/>
    <property type="project" value="TreeGrafter"/>
</dbReference>
<dbReference type="GO" id="GO:0004107">
    <property type="term" value="F:chorismate synthase activity"/>
    <property type="evidence" value="ECO:0007669"/>
    <property type="project" value="UniProtKB-UniRule"/>
</dbReference>
<dbReference type="GO" id="GO:0010181">
    <property type="term" value="F:FMN binding"/>
    <property type="evidence" value="ECO:0007669"/>
    <property type="project" value="TreeGrafter"/>
</dbReference>
<dbReference type="GO" id="GO:0008652">
    <property type="term" value="P:amino acid biosynthetic process"/>
    <property type="evidence" value="ECO:0007669"/>
    <property type="project" value="UniProtKB-KW"/>
</dbReference>
<dbReference type="GO" id="GO:0009073">
    <property type="term" value="P:aromatic amino acid family biosynthetic process"/>
    <property type="evidence" value="ECO:0007669"/>
    <property type="project" value="UniProtKB-KW"/>
</dbReference>
<dbReference type="GO" id="GO:0009423">
    <property type="term" value="P:chorismate biosynthetic process"/>
    <property type="evidence" value="ECO:0007669"/>
    <property type="project" value="UniProtKB-UniRule"/>
</dbReference>
<dbReference type="CDD" id="cd07304">
    <property type="entry name" value="Chorismate_synthase"/>
    <property type="match status" value="1"/>
</dbReference>
<dbReference type="FunFam" id="3.60.150.10:FF:000002">
    <property type="entry name" value="Chorismate synthase"/>
    <property type="match status" value="1"/>
</dbReference>
<dbReference type="Gene3D" id="3.60.150.10">
    <property type="entry name" value="Chorismate synthase AroC"/>
    <property type="match status" value="1"/>
</dbReference>
<dbReference type="HAMAP" id="MF_00300">
    <property type="entry name" value="Chorismate_synth"/>
    <property type="match status" value="1"/>
</dbReference>
<dbReference type="InterPro" id="IPR000453">
    <property type="entry name" value="Chorismate_synth"/>
</dbReference>
<dbReference type="InterPro" id="IPR035904">
    <property type="entry name" value="Chorismate_synth_AroC_sf"/>
</dbReference>
<dbReference type="InterPro" id="IPR020541">
    <property type="entry name" value="Chorismate_synthase_CS"/>
</dbReference>
<dbReference type="NCBIfam" id="TIGR00033">
    <property type="entry name" value="aroC"/>
    <property type="match status" value="1"/>
</dbReference>
<dbReference type="NCBIfam" id="NF003793">
    <property type="entry name" value="PRK05382.1"/>
    <property type="match status" value="1"/>
</dbReference>
<dbReference type="PANTHER" id="PTHR21085">
    <property type="entry name" value="CHORISMATE SYNTHASE"/>
    <property type="match status" value="1"/>
</dbReference>
<dbReference type="PANTHER" id="PTHR21085:SF0">
    <property type="entry name" value="CHORISMATE SYNTHASE"/>
    <property type="match status" value="1"/>
</dbReference>
<dbReference type="Pfam" id="PF01264">
    <property type="entry name" value="Chorismate_synt"/>
    <property type="match status" value="1"/>
</dbReference>
<dbReference type="PIRSF" id="PIRSF001456">
    <property type="entry name" value="Chorismate_synth"/>
    <property type="match status" value="1"/>
</dbReference>
<dbReference type="SUPFAM" id="SSF103263">
    <property type="entry name" value="Chorismate synthase, AroC"/>
    <property type="match status" value="1"/>
</dbReference>
<dbReference type="PROSITE" id="PS00787">
    <property type="entry name" value="CHORISMATE_SYNTHASE_1"/>
    <property type="match status" value="1"/>
</dbReference>
<dbReference type="PROSITE" id="PS00788">
    <property type="entry name" value="CHORISMATE_SYNTHASE_2"/>
    <property type="match status" value="1"/>
</dbReference>
<dbReference type="PROSITE" id="PS00789">
    <property type="entry name" value="CHORISMATE_SYNTHASE_3"/>
    <property type="match status" value="1"/>
</dbReference>
<organism>
    <name type="scientific">Mycobacterium sp. (strain JLS)</name>
    <dbReference type="NCBI Taxonomy" id="164757"/>
    <lineage>
        <taxon>Bacteria</taxon>
        <taxon>Bacillati</taxon>
        <taxon>Actinomycetota</taxon>
        <taxon>Actinomycetes</taxon>
        <taxon>Mycobacteriales</taxon>
        <taxon>Mycobacteriaceae</taxon>
        <taxon>Mycobacterium</taxon>
    </lineage>
</organism>
<keyword id="KW-0028">Amino-acid biosynthesis</keyword>
<keyword id="KW-0057">Aromatic amino acid biosynthesis</keyword>
<keyword id="KW-0274">FAD</keyword>
<keyword id="KW-0285">Flavoprotein</keyword>
<keyword id="KW-0288">FMN</keyword>
<keyword id="KW-0456">Lyase</keyword>
<keyword id="KW-0521">NADP</keyword>
<protein>
    <recommendedName>
        <fullName evidence="1">Chorismate synthase</fullName>
        <shortName evidence="1">CS</shortName>
        <ecNumber evidence="1">4.2.3.5</ecNumber>
    </recommendedName>
    <alternativeName>
        <fullName evidence="1">5-enolpyruvylshikimate-3-phosphate phospholyase</fullName>
    </alternativeName>
</protein>